<proteinExistence type="inferred from homology"/>
<evidence type="ECO:0000255" key="1">
    <source>
        <dbReference type="HAMAP-Rule" id="MF_01367"/>
    </source>
</evidence>
<evidence type="ECO:0000305" key="2"/>
<sequence length="122" mass="13370">MIQMQTNLEVADNSGARRVMCIKVLGGAGRRYASVGDVIVVSVKEAIPRGRVKKGDVLRAVVVRVNQNLKRKDGSVIRFDKNAAVIVNKQSEPVGTRIFGPVPRELRAKNHMKIISLAPEVL</sequence>
<comment type="function">
    <text evidence="1">Binds to 23S rRNA. Forms part of two intersubunit bridges in the 70S ribosome.</text>
</comment>
<comment type="subunit">
    <text evidence="1">Part of the 50S ribosomal subunit. Forms a cluster with proteins L3 and L19. In the 70S ribosome, L14 and L19 interact and together make contacts with the 16S rRNA in bridges B5 and B8.</text>
</comment>
<comment type="similarity">
    <text evidence="1">Belongs to the universal ribosomal protein uL14 family.</text>
</comment>
<protein>
    <recommendedName>
        <fullName evidence="1">Large ribosomal subunit protein uL14</fullName>
    </recommendedName>
    <alternativeName>
        <fullName evidence="2">50S ribosomal protein L14</fullName>
    </alternativeName>
</protein>
<gene>
    <name evidence="1" type="primary">rplN</name>
    <name type="ordered locus">CCNA_01316</name>
</gene>
<organism>
    <name type="scientific">Caulobacter vibrioides (strain NA1000 / CB15N)</name>
    <name type="common">Caulobacter crescentus</name>
    <dbReference type="NCBI Taxonomy" id="565050"/>
    <lineage>
        <taxon>Bacteria</taxon>
        <taxon>Pseudomonadati</taxon>
        <taxon>Pseudomonadota</taxon>
        <taxon>Alphaproteobacteria</taxon>
        <taxon>Caulobacterales</taxon>
        <taxon>Caulobacteraceae</taxon>
        <taxon>Caulobacter</taxon>
    </lineage>
</organism>
<keyword id="KW-1185">Reference proteome</keyword>
<keyword id="KW-0687">Ribonucleoprotein</keyword>
<keyword id="KW-0689">Ribosomal protein</keyword>
<keyword id="KW-0694">RNA-binding</keyword>
<keyword id="KW-0699">rRNA-binding</keyword>
<reference key="1">
    <citation type="journal article" date="2010" name="J. Bacteriol.">
        <title>The genetic basis of laboratory adaptation in Caulobacter crescentus.</title>
        <authorList>
            <person name="Marks M.E."/>
            <person name="Castro-Rojas C.M."/>
            <person name="Teiling C."/>
            <person name="Du L."/>
            <person name="Kapatral V."/>
            <person name="Walunas T.L."/>
            <person name="Crosson S."/>
        </authorList>
    </citation>
    <scope>NUCLEOTIDE SEQUENCE [LARGE SCALE GENOMIC DNA]</scope>
    <source>
        <strain>NA1000 / CB15N</strain>
    </source>
</reference>
<name>RL14_CAUVN</name>
<accession>B8H4E4</accession>
<feature type="chain" id="PRO_1000166908" description="Large ribosomal subunit protein uL14">
    <location>
        <begin position="1"/>
        <end position="122"/>
    </location>
</feature>
<dbReference type="EMBL" id="CP001340">
    <property type="protein sequence ID" value="ACL94781.1"/>
    <property type="molecule type" value="Genomic_DNA"/>
</dbReference>
<dbReference type="RefSeq" id="WP_010919137.1">
    <property type="nucleotide sequence ID" value="NC_011916.1"/>
</dbReference>
<dbReference type="RefSeq" id="YP_002516689.1">
    <property type="nucleotide sequence ID" value="NC_011916.1"/>
</dbReference>
<dbReference type="SMR" id="B8H4E4"/>
<dbReference type="GeneID" id="7333048"/>
<dbReference type="KEGG" id="ccs:CCNA_01316"/>
<dbReference type="PATRIC" id="fig|565050.3.peg.1300"/>
<dbReference type="HOGENOM" id="CLU_095071_2_1_5"/>
<dbReference type="OrthoDB" id="9806379at2"/>
<dbReference type="PhylomeDB" id="B8H4E4"/>
<dbReference type="Proteomes" id="UP000001364">
    <property type="component" value="Chromosome"/>
</dbReference>
<dbReference type="GO" id="GO:0022625">
    <property type="term" value="C:cytosolic large ribosomal subunit"/>
    <property type="evidence" value="ECO:0007669"/>
    <property type="project" value="TreeGrafter"/>
</dbReference>
<dbReference type="GO" id="GO:0070180">
    <property type="term" value="F:large ribosomal subunit rRNA binding"/>
    <property type="evidence" value="ECO:0007669"/>
    <property type="project" value="TreeGrafter"/>
</dbReference>
<dbReference type="GO" id="GO:0003735">
    <property type="term" value="F:structural constituent of ribosome"/>
    <property type="evidence" value="ECO:0007669"/>
    <property type="project" value="InterPro"/>
</dbReference>
<dbReference type="GO" id="GO:0006412">
    <property type="term" value="P:translation"/>
    <property type="evidence" value="ECO:0007669"/>
    <property type="project" value="UniProtKB-UniRule"/>
</dbReference>
<dbReference type="CDD" id="cd00337">
    <property type="entry name" value="Ribosomal_uL14"/>
    <property type="match status" value="1"/>
</dbReference>
<dbReference type="FunFam" id="2.40.150.20:FF:000001">
    <property type="entry name" value="50S ribosomal protein L14"/>
    <property type="match status" value="1"/>
</dbReference>
<dbReference type="Gene3D" id="2.40.150.20">
    <property type="entry name" value="Ribosomal protein L14"/>
    <property type="match status" value="1"/>
</dbReference>
<dbReference type="HAMAP" id="MF_01367">
    <property type="entry name" value="Ribosomal_uL14"/>
    <property type="match status" value="1"/>
</dbReference>
<dbReference type="InterPro" id="IPR000218">
    <property type="entry name" value="Ribosomal_uL14"/>
</dbReference>
<dbReference type="InterPro" id="IPR005745">
    <property type="entry name" value="Ribosomal_uL14_bac-type"/>
</dbReference>
<dbReference type="InterPro" id="IPR019972">
    <property type="entry name" value="Ribosomal_uL14_CS"/>
</dbReference>
<dbReference type="InterPro" id="IPR036853">
    <property type="entry name" value="Ribosomal_uL14_sf"/>
</dbReference>
<dbReference type="NCBIfam" id="TIGR01067">
    <property type="entry name" value="rplN_bact"/>
    <property type="match status" value="1"/>
</dbReference>
<dbReference type="PANTHER" id="PTHR11761">
    <property type="entry name" value="50S/60S RIBOSOMAL PROTEIN L14/L23"/>
    <property type="match status" value="1"/>
</dbReference>
<dbReference type="PANTHER" id="PTHR11761:SF3">
    <property type="entry name" value="LARGE RIBOSOMAL SUBUNIT PROTEIN UL14M"/>
    <property type="match status" value="1"/>
</dbReference>
<dbReference type="Pfam" id="PF00238">
    <property type="entry name" value="Ribosomal_L14"/>
    <property type="match status" value="1"/>
</dbReference>
<dbReference type="SMART" id="SM01374">
    <property type="entry name" value="Ribosomal_L14"/>
    <property type="match status" value="1"/>
</dbReference>
<dbReference type="SUPFAM" id="SSF50193">
    <property type="entry name" value="Ribosomal protein L14"/>
    <property type="match status" value="1"/>
</dbReference>
<dbReference type="PROSITE" id="PS00049">
    <property type="entry name" value="RIBOSOMAL_L14"/>
    <property type="match status" value="1"/>
</dbReference>